<feature type="chain" id="PRO_0000322826" description="Holliday junction branch migration complex subunit RuvB">
    <location>
        <begin position="1"/>
        <end position="325"/>
    </location>
</feature>
<feature type="region of interest" description="Large ATPase domain (RuvB-L)" evidence="1">
    <location>
        <begin position="1"/>
        <end position="180"/>
    </location>
</feature>
<feature type="region of interest" description="Small ATPAse domain (RuvB-S)" evidence="1">
    <location>
        <begin position="181"/>
        <end position="251"/>
    </location>
</feature>
<feature type="region of interest" description="Head domain (RuvB-H)" evidence="1">
    <location>
        <begin position="254"/>
        <end position="325"/>
    </location>
</feature>
<feature type="binding site" evidence="1">
    <location>
        <position position="19"/>
    </location>
    <ligand>
        <name>ATP</name>
        <dbReference type="ChEBI" id="CHEBI:30616"/>
    </ligand>
</feature>
<feature type="binding site" evidence="1">
    <location>
        <position position="20"/>
    </location>
    <ligand>
        <name>ATP</name>
        <dbReference type="ChEBI" id="CHEBI:30616"/>
    </ligand>
</feature>
<feature type="binding site" evidence="1">
    <location>
        <position position="61"/>
    </location>
    <ligand>
        <name>ATP</name>
        <dbReference type="ChEBI" id="CHEBI:30616"/>
    </ligand>
</feature>
<feature type="binding site" evidence="1">
    <location>
        <position position="64"/>
    </location>
    <ligand>
        <name>ATP</name>
        <dbReference type="ChEBI" id="CHEBI:30616"/>
    </ligand>
</feature>
<feature type="binding site" evidence="1">
    <location>
        <position position="65"/>
    </location>
    <ligand>
        <name>ATP</name>
        <dbReference type="ChEBI" id="CHEBI:30616"/>
    </ligand>
</feature>
<feature type="binding site" evidence="1">
    <location>
        <position position="65"/>
    </location>
    <ligand>
        <name>Mg(2+)</name>
        <dbReference type="ChEBI" id="CHEBI:18420"/>
    </ligand>
</feature>
<feature type="binding site" evidence="1">
    <location>
        <position position="66"/>
    </location>
    <ligand>
        <name>ATP</name>
        <dbReference type="ChEBI" id="CHEBI:30616"/>
    </ligand>
</feature>
<feature type="binding site" evidence="1">
    <location>
        <begin position="127"/>
        <end position="129"/>
    </location>
    <ligand>
        <name>ATP</name>
        <dbReference type="ChEBI" id="CHEBI:30616"/>
    </ligand>
</feature>
<feature type="binding site" evidence="1">
    <location>
        <position position="170"/>
    </location>
    <ligand>
        <name>ATP</name>
        <dbReference type="ChEBI" id="CHEBI:30616"/>
    </ligand>
</feature>
<feature type="binding site" evidence="1">
    <location>
        <position position="180"/>
    </location>
    <ligand>
        <name>ATP</name>
        <dbReference type="ChEBI" id="CHEBI:30616"/>
    </ligand>
</feature>
<feature type="binding site" evidence="1">
    <location>
        <position position="217"/>
    </location>
    <ligand>
        <name>ATP</name>
        <dbReference type="ChEBI" id="CHEBI:30616"/>
    </ligand>
</feature>
<feature type="binding site" evidence="1">
    <location>
        <position position="290"/>
    </location>
    <ligand>
        <name>DNA</name>
        <dbReference type="ChEBI" id="CHEBI:16991"/>
    </ligand>
</feature>
<feature type="binding site" evidence="1">
    <location>
        <position position="309"/>
    </location>
    <ligand>
        <name>DNA</name>
        <dbReference type="ChEBI" id="CHEBI:16991"/>
    </ligand>
</feature>
<feature type="binding site" evidence="1">
    <location>
        <position position="314"/>
    </location>
    <ligand>
        <name>DNA</name>
        <dbReference type="ChEBI" id="CHEBI:16991"/>
    </ligand>
</feature>
<protein>
    <recommendedName>
        <fullName evidence="1">Holliday junction branch migration complex subunit RuvB</fullName>
        <ecNumber evidence="1">3.6.4.-</ecNumber>
    </recommendedName>
</protein>
<sequence>MKNQLLDAKVASEEQETVLRPSLLNDFIGQNQMKSNLTIFITSSIERDESLDHTLLHGPPGLGKTSIAQIIAKEKNVNLKSTAGPILSKAADLAAILTNLQKNDVLFIDEIHRLNIHVEEILYSAMEDFSLDIMIGEGPSARSVKIYLPKFTLIGATTRLGLISKPLCDRFGIHLKLNFYSCEELTQIVERGAKVLNVALDTNAAIEIANRSRGTPRIALRLLKRVRDFGIYQNINPLNQQITDYALNQLGIDKLGLDSSDHKYLRFIAENYDGGPVGIDTIAAALSEQRDTIEEMIEPYLIQIGFVQRTQRGRVITANALKHLH</sequence>
<accession>A5CEJ6</accession>
<reference key="1">
    <citation type="journal article" date="2007" name="Proc. Natl. Acad. Sci. U.S.A.">
        <title>The Orientia tsutsugamushi genome reveals massive proliferation of conjugative type IV secretion system and host-cell interaction genes.</title>
        <authorList>
            <person name="Cho N.-H."/>
            <person name="Kim H.-R."/>
            <person name="Lee J.-H."/>
            <person name="Kim S.-Y."/>
            <person name="Kim J."/>
            <person name="Cha S."/>
            <person name="Kim S.-Y."/>
            <person name="Darby A.C."/>
            <person name="Fuxelius H.-H."/>
            <person name="Yin J."/>
            <person name="Kim J.H."/>
            <person name="Kim J."/>
            <person name="Lee S.J."/>
            <person name="Koh Y.-S."/>
            <person name="Jang W.-J."/>
            <person name="Park K.-H."/>
            <person name="Andersson S.G.E."/>
            <person name="Choi M.-S."/>
            <person name="Kim I.-S."/>
        </authorList>
    </citation>
    <scope>NUCLEOTIDE SEQUENCE [LARGE SCALE GENOMIC DNA]</scope>
    <source>
        <strain>Boryong</strain>
    </source>
</reference>
<keyword id="KW-0067">ATP-binding</keyword>
<keyword id="KW-0963">Cytoplasm</keyword>
<keyword id="KW-0227">DNA damage</keyword>
<keyword id="KW-0233">DNA recombination</keyword>
<keyword id="KW-0234">DNA repair</keyword>
<keyword id="KW-0238">DNA-binding</keyword>
<keyword id="KW-0378">Hydrolase</keyword>
<keyword id="KW-0547">Nucleotide-binding</keyword>
<keyword id="KW-1185">Reference proteome</keyword>
<gene>
    <name evidence="1" type="primary">ruvB</name>
    <name type="ordered locus">OTBS_1496</name>
</gene>
<comment type="function">
    <text evidence="1">The RuvA-RuvB-RuvC complex processes Holliday junction (HJ) DNA during genetic recombination and DNA repair, while the RuvA-RuvB complex plays an important role in the rescue of blocked DNA replication forks via replication fork reversal (RFR). RuvA specifically binds to HJ cruciform DNA, conferring on it an open structure. The RuvB hexamer acts as an ATP-dependent pump, pulling dsDNA into and through the RuvAB complex. RuvB forms 2 homohexamers on either side of HJ DNA bound by 1 or 2 RuvA tetramers; 4 subunits per hexamer contact DNA at a time. Coordinated motions by a converter formed by DNA-disengaged RuvB subunits stimulates ATP hydrolysis and nucleotide exchange. Immobilization of the converter enables RuvB to convert the ATP-contained energy into a lever motion, pulling 2 nucleotides of DNA out of the RuvA tetramer per ATP hydrolyzed, thus driving DNA branch migration. The RuvB motors rotate together with the DNA substrate, which together with the progressing nucleotide cycle form the mechanistic basis for DNA recombination by continuous HJ branch migration. Branch migration allows RuvC to scan DNA until it finds its consensus sequence, where it cleaves and resolves cruciform DNA.</text>
</comment>
<comment type="catalytic activity">
    <reaction evidence="1">
        <text>ATP + H2O = ADP + phosphate + H(+)</text>
        <dbReference type="Rhea" id="RHEA:13065"/>
        <dbReference type="ChEBI" id="CHEBI:15377"/>
        <dbReference type="ChEBI" id="CHEBI:15378"/>
        <dbReference type="ChEBI" id="CHEBI:30616"/>
        <dbReference type="ChEBI" id="CHEBI:43474"/>
        <dbReference type="ChEBI" id="CHEBI:456216"/>
    </reaction>
</comment>
<comment type="subunit">
    <text evidence="1">Homohexamer. Forms an RuvA(8)-RuvB(12)-Holliday junction (HJ) complex. HJ DNA is sandwiched between 2 RuvA tetramers; dsDNA enters through RuvA and exits via RuvB. An RuvB hexamer assembles on each DNA strand where it exits the tetramer. Each RuvB hexamer is contacted by two RuvA subunits (via domain III) on 2 adjacent RuvB subunits; this complex drives branch migration. In the full resolvosome a probable DNA-RuvA(4)-RuvB(12)-RuvC(2) complex forms which resolves the HJ.</text>
</comment>
<comment type="subcellular location">
    <subcellularLocation>
        <location evidence="1">Cytoplasm</location>
    </subcellularLocation>
</comment>
<comment type="domain">
    <text evidence="1">Has 3 domains, the large (RuvB-L) and small ATPase (RuvB-S) domains and the C-terminal head (RuvB-H) domain. The head domain binds DNA, while the ATPase domains jointly bind ATP, ADP or are empty depending on the state of the subunit in the translocation cycle. During a single DNA translocation step the structure of each domain remains the same, but their relative positions change.</text>
</comment>
<comment type="similarity">
    <text evidence="1">Belongs to the RuvB family.</text>
</comment>
<name>RUVB_ORITB</name>
<evidence type="ECO:0000255" key="1">
    <source>
        <dbReference type="HAMAP-Rule" id="MF_00016"/>
    </source>
</evidence>
<proteinExistence type="inferred from homology"/>
<dbReference type="EC" id="3.6.4.-" evidence="1"/>
<dbReference type="EMBL" id="AM494475">
    <property type="protein sequence ID" value="CAM80578.1"/>
    <property type="molecule type" value="Genomic_DNA"/>
</dbReference>
<dbReference type="RefSeq" id="WP_011944917.1">
    <property type="nucleotide sequence ID" value="NC_009488.1"/>
</dbReference>
<dbReference type="SMR" id="A5CEJ6"/>
<dbReference type="KEGG" id="ots:OTBS_1496"/>
<dbReference type="eggNOG" id="COG2255">
    <property type="taxonomic scope" value="Bacteria"/>
</dbReference>
<dbReference type="HOGENOM" id="CLU_055599_1_0_5"/>
<dbReference type="Proteomes" id="UP000001565">
    <property type="component" value="Chromosome"/>
</dbReference>
<dbReference type="GO" id="GO:0005737">
    <property type="term" value="C:cytoplasm"/>
    <property type="evidence" value="ECO:0007669"/>
    <property type="project" value="UniProtKB-SubCell"/>
</dbReference>
<dbReference type="GO" id="GO:0048476">
    <property type="term" value="C:Holliday junction resolvase complex"/>
    <property type="evidence" value="ECO:0007669"/>
    <property type="project" value="UniProtKB-UniRule"/>
</dbReference>
<dbReference type="GO" id="GO:0005524">
    <property type="term" value="F:ATP binding"/>
    <property type="evidence" value="ECO:0007669"/>
    <property type="project" value="UniProtKB-UniRule"/>
</dbReference>
<dbReference type="GO" id="GO:0016887">
    <property type="term" value="F:ATP hydrolysis activity"/>
    <property type="evidence" value="ECO:0007669"/>
    <property type="project" value="InterPro"/>
</dbReference>
<dbReference type="GO" id="GO:0000400">
    <property type="term" value="F:four-way junction DNA binding"/>
    <property type="evidence" value="ECO:0007669"/>
    <property type="project" value="UniProtKB-UniRule"/>
</dbReference>
<dbReference type="GO" id="GO:0009378">
    <property type="term" value="F:four-way junction helicase activity"/>
    <property type="evidence" value="ECO:0007669"/>
    <property type="project" value="InterPro"/>
</dbReference>
<dbReference type="GO" id="GO:0006310">
    <property type="term" value="P:DNA recombination"/>
    <property type="evidence" value="ECO:0007669"/>
    <property type="project" value="UniProtKB-UniRule"/>
</dbReference>
<dbReference type="GO" id="GO:0006281">
    <property type="term" value="P:DNA repair"/>
    <property type="evidence" value="ECO:0007669"/>
    <property type="project" value="UniProtKB-UniRule"/>
</dbReference>
<dbReference type="CDD" id="cd00009">
    <property type="entry name" value="AAA"/>
    <property type="match status" value="1"/>
</dbReference>
<dbReference type="Gene3D" id="1.10.8.60">
    <property type="match status" value="1"/>
</dbReference>
<dbReference type="Gene3D" id="3.40.50.300">
    <property type="entry name" value="P-loop containing nucleotide triphosphate hydrolases"/>
    <property type="match status" value="1"/>
</dbReference>
<dbReference type="Gene3D" id="1.10.10.10">
    <property type="entry name" value="Winged helix-like DNA-binding domain superfamily/Winged helix DNA-binding domain"/>
    <property type="match status" value="1"/>
</dbReference>
<dbReference type="HAMAP" id="MF_00016">
    <property type="entry name" value="DNA_HJ_migration_RuvB"/>
    <property type="match status" value="1"/>
</dbReference>
<dbReference type="InterPro" id="IPR003593">
    <property type="entry name" value="AAA+_ATPase"/>
</dbReference>
<dbReference type="InterPro" id="IPR041445">
    <property type="entry name" value="AAA_lid_4"/>
</dbReference>
<dbReference type="InterPro" id="IPR004605">
    <property type="entry name" value="DNA_helicase_Holl-junc_RuvB"/>
</dbReference>
<dbReference type="InterPro" id="IPR027417">
    <property type="entry name" value="P-loop_NTPase"/>
</dbReference>
<dbReference type="InterPro" id="IPR008824">
    <property type="entry name" value="RuvB-like_N"/>
</dbReference>
<dbReference type="InterPro" id="IPR008823">
    <property type="entry name" value="RuvB_C"/>
</dbReference>
<dbReference type="InterPro" id="IPR036388">
    <property type="entry name" value="WH-like_DNA-bd_sf"/>
</dbReference>
<dbReference type="InterPro" id="IPR036390">
    <property type="entry name" value="WH_DNA-bd_sf"/>
</dbReference>
<dbReference type="NCBIfam" id="NF000868">
    <property type="entry name" value="PRK00080.1"/>
    <property type="match status" value="1"/>
</dbReference>
<dbReference type="NCBIfam" id="TIGR00635">
    <property type="entry name" value="ruvB"/>
    <property type="match status" value="1"/>
</dbReference>
<dbReference type="PANTHER" id="PTHR42848">
    <property type="match status" value="1"/>
</dbReference>
<dbReference type="PANTHER" id="PTHR42848:SF1">
    <property type="entry name" value="HOLLIDAY JUNCTION BRANCH MIGRATION COMPLEX SUBUNIT RUVB"/>
    <property type="match status" value="1"/>
</dbReference>
<dbReference type="Pfam" id="PF17864">
    <property type="entry name" value="AAA_lid_4"/>
    <property type="match status" value="1"/>
</dbReference>
<dbReference type="Pfam" id="PF05491">
    <property type="entry name" value="RuvB_C"/>
    <property type="match status" value="1"/>
</dbReference>
<dbReference type="Pfam" id="PF05496">
    <property type="entry name" value="RuvB_N"/>
    <property type="match status" value="1"/>
</dbReference>
<dbReference type="SMART" id="SM00382">
    <property type="entry name" value="AAA"/>
    <property type="match status" value="1"/>
</dbReference>
<dbReference type="SUPFAM" id="SSF52540">
    <property type="entry name" value="P-loop containing nucleoside triphosphate hydrolases"/>
    <property type="match status" value="1"/>
</dbReference>
<dbReference type="SUPFAM" id="SSF46785">
    <property type="entry name" value="Winged helix' DNA-binding domain"/>
    <property type="match status" value="1"/>
</dbReference>
<organism>
    <name type="scientific">Orientia tsutsugamushi (strain Boryong)</name>
    <name type="common">Rickettsia tsutsugamushi</name>
    <dbReference type="NCBI Taxonomy" id="357244"/>
    <lineage>
        <taxon>Bacteria</taxon>
        <taxon>Pseudomonadati</taxon>
        <taxon>Pseudomonadota</taxon>
        <taxon>Alphaproteobacteria</taxon>
        <taxon>Rickettsiales</taxon>
        <taxon>Rickettsiaceae</taxon>
        <taxon>Rickettsieae</taxon>
        <taxon>Orientia</taxon>
    </lineage>
</organism>